<name>RL71_PARTE</name>
<sequence length="248" mass="28599">MSQKKQKIQVEQKVPENVAKKTQRDSKLRDAVAKRRTERLAANKTRRAQWEKTAQAYEAEYKAADKSLVDNLRKAKTEGGFYVPAEAKLILVVRIRGINTLNPQVRQTLRLLKLRQLHNAAFVRVNKATIEMIRKVEPYVTYGYPSRAVIKNLIYKRGYAKINGQRIPITNNNVIEQQLGKVGIHSVEDLIHEITTVGPHFKEANRFLWAFKLRGPRGGFIAKRKSFINQGDWGNREDLINDLVKRMI</sequence>
<gene>
    <name type="primary">Rpl7-1</name>
    <name type="ORF">GSPATT00037788001</name>
</gene>
<proteinExistence type="inferred from homology"/>
<organism>
    <name type="scientific">Paramecium tetraurelia</name>
    <dbReference type="NCBI Taxonomy" id="5888"/>
    <lineage>
        <taxon>Eukaryota</taxon>
        <taxon>Sar</taxon>
        <taxon>Alveolata</taxon>
        <taxon>Ciliophora</taxon>
        <taxon>Intramacronucleata</taxon>
        <taxon>Oligohymenophorea</taxon>
        <taxon>Peniculida</taxon>
        <taxon>Parameciidae</taxon>
        <taxon>Paramecium</taxon>
    </lineage>
</organism>
<feature type="chain" id="PRO_0000307860" description="Large ribosomal subunit protein uL30A">
    <location>
        <begin position="1"/>
        <end position="248"/>
    </location>
</feature>
<feature type="region of interest" description="Disordered" evidence="2">
    <location>
        <begin position="1"/>
        <end position="44"/>
    </location>
</feature>
<feature type="compositionally biased region" description="Basic and acidic residues" evidence="2">
    <location>
        <begin position="8"/>
        <end position="41"/>
    </location>
</feature>
<evidence type="ECO:0000250" key="1"/>
<evidence type="ECO:0000256" key="2">
    <source>
        <dbReference type="SAM" id="MobiDB-lite"/>
    </source>
</evidence>
<evidence type="ECO:0000305" key="3"/>
<dbReference type="EMBL" id="CT868067">
    <property type="protein sequence ID" value="CAK69349.1"/>
    <property type="molecule type" value="Genomic_DNA"/>
</dbReference>
<dbReference type="RefSeq" id="XP_001436746.1">
    <property type="nucleotide sequence ID" value="XM_001436709.1"/>
</dbReference>
<dbReference type="SMR" id="A0CEY2"/>
<dbReference type="FunCoup" id="A0CEY2">
    <property type="interactions" value="1056"/>
</dbReference>
<dbReference type="STRING" id="5888.A0CEY2"/>
<dbReference type="EnsemblProtists" id="CAK69349">
    <property type="protein sequence ID" value="CAK69349"/>
    <property type="gene ID" value="GSPATT00037788001"/>
</dbReference>
<dbReference type="GeneID" id="5022531"/>
<dbReference type="KEGG" id="ptm:GSPATT00037788001"/>
<dbReference type="eggNOG" id="KOG3184">
    <property type="taxonomic scope" value="Eukaryota"/>
</dbReference>
<dbReference type="HOGENOM" id="CLU_055156_0_2_1"/>
<dbReference type="InParanoid" id="A0CEY2"/>
<dbReference type="OMA" id="CGMMKKT"/>
<dbReference type="OrthoDB" id="28644at2759"/>
<dbReference type="Proteomes" id="UP000000600">
    <property type="component" value="Partially assembled WGS sequence"/>
</dbReference>
<dbReference type="GO" id="GO:0022625">
    <property type="term" value="C:cytosolic large ribosomal subunit"/>
    <property type="evidence" value="ECO:0000318"/>
    <property type="project" value="GO_Central"/>
</dbReference>
<dbReference type="GO" id="GO:0003723">
    <property type="term" value="F:RNA binding"/>
    <property type="evidence" value="ECO:0000318"/>
    <property type="project" value="GO_Central"/>
</dbReference>
<dbReference type="GO" id="GO:0003735">
    <property type="term" value="F:structural constituent of ribosome"/>
    <property type="evidence" value="ECO:0000318"/>
    <property type="project" value="GO_Central"/>
</dbReference>
<dbReference type="GO" id="GO:0000463">
    <property type="term" value="P:maturation of LSU-rRNA from tricistronic rRNA transcript (SSU-rRNA, 5.8S rRNA, LSU-rRNA)"/>
    <property type="evidence" value="ECO:0000318"/>
    <property type="project" value="GO_Central"/>
</dbReference>
<dbReference type="CDD" id="cd01657">
    <property type="entry name" value="Ribosomal_L7_archeal_euk"/>
    <property type="match status" value="1"/>
</dbReference>
<dbReference type="FunFam" id="3.30.1390.20:FF:000003">
    <property type="entry name" value="60S ribosomal protein L7"/>
    <property type="match status" value="1"/>
</dbReference>
<dbReference type="Gene3D" id="3.30.1390.20">
    <property type="entry name" value="Ribosomal protein L30, ferredoxin-like fold domain"/>
    <property type="match status" value="2"/>
</dbReference>
<dbReference type="InterPro" id="IPR036919">
    <property type="entry name" value="Ribo_uL30_ferredoxin-like_sf"/>
</dbReference>
<dbReference type="InterPro" id="IPR039699">
    <property type="entry name" value="Ribosomal_uL30"/>
</dbReference>
<dbReference type="InterPro" id="IPR005998">
    <property type="entry name" value="Ribosomal_uL30_euk"/>
</dbReference>
<dbReference type="InterPro" id="IPR035808">
    <property type="entry name" value="Ribosomal_uL30_euk_arc"/>
</dbReference>
<dbReference type="InterPro" id="IPR016082">
    <property type="entry name" value="Ribosomal_uL30_ferredoxin-like"/>
</dbReference>
<dbReference type="InterPro" id="IPR012988">
    <property type="entry name" value="Ribosomal_uL30_N_euk"/>
</dbReference>
<dbReference type="NCBIfam" id="TIGR01310">
    <property type="entry name" value="uL30_euk"/>
    <property type="match status" value="1"/>
</dbReference>
<dbReference type="PANTHER" id="PTHR11524">
    <property type="entry name" value="60S RIBOSOMAL PROTEIN L7"/>
    <property type="match status" value="1"/>
</dbReference>
<dbReference type="PANTHER" id="PTHR11524:SF16">
    <property type="entry name" value="LARGE RIBOSOMAL SUBUNIT PROTEIN UL30"/>
    <property type="match status" value="1"/>
</dbReference>
<dbReference type="Pfam" id="PF00327">
    <property type="entry name" value="Ribosomal_L30"/>
    <property type="match status" value="1"/>
</dbReference>
<dbReference type="Pfam" id="PF08079">
    <property type="entry name" value="Ribosomal_L30_N"/>
    <property type="match status" value="1"/>
</dbReference>
<dbReference type="SUPFAM" id="SSF55129">
    <property type="entry name" value="Ribosomal protein L30p/L7e"/>
    <property type="match status" value="1"/>
</dbReference>
<keyword id="KW-1185">Reference proteome</keyword>
<keyword id="KW-0687">Ribonucleoprotein</keyword>
<keyword id="KW-0689">Ribosomal protein</keyword>
<keyword id="KW-0694">RNA-binding</keyword>
<protein>
    <recommendedName>
        <fullName evidence="3">Large ribosomal subunit protein uL30A</fullName>
    </recommendedName>
    <alternativeName>
        <fullName>60S ribosomal protein L7 1</fullName>
    </alternativeName>
</protein>
<reference key="1">
    <citation type="journal article" date="2006" name="Nature">
        <title>Global trends of whole-genome duplications revealed by the ciliate Paramecium tetraurelia.</title>
        <authorList>
            <person name="Aury J.-M."/>
            <person name="Jaillon O."/>
            <person name="Duret L."/>
            <person name="Noel B."/>
            <person name="Jubin C."/>
            <person name="Porcel B.M."/>
            <person name="Segurens B."/>
            <person name="Daubin V."/>
            <person name="Anthouard V."/>
            <person name="Aiach N."/>
            <person name="Arnaiz O."/>
            <person name="Billaut A."/>
            <person name="Beisson J."/>
            <person name="Blanc I."/>
            <person name="Bouhouche K."/>
            <person name="Camara F."/>
            <person name="Duharcourt S."/>
            <person name="Guigo R."/>
            <person name="Gogendeau D."/>
            <person name="Katinka M."/>
            <person name="Keller A.-M."/>
            <person name="Kissmehl R."/>
            <person name="Klotz C."/>
            <person name="Koll F."/>
            <person name="Le Mouel A."/>
            <person name="Lepere G."/>
            <person name="Malinsky S."/>
            <person name="Nowacki M."/>
            <person name="Nowak J.K."/>
            <person name="Plattner H."/>
            <person name="Poulain J."/>
            <person name="Ruiz F."/>
            <person name="Serrano V."/>
            <person name="Zagulski M."/>
            <person name="Dessen P."/>
            <person name="Betermier M."/>
            <person name="Weissenbach J."/>
            <person name="Scarpelli C."/>
            <person name="Schaechter V."/>
            <person name="Sperling L."/>
            <person name="Meyer E."/>
            <person name="Cohen J."/>
            <person name="Wincker P."/>
        </authorList>
    </citation>
    <scope>NUCLEOTIDE SEQUENCE [LARGE SCALE GENOMIC DNA]</scope>
    <source>
        <strain>Stock d4-2</strain>
    </source>
</reference>
<comment type="function">
    <text evidence="1">Binds to G-rich structures in 28S rRNA and in mRNAs. Plays a regulatory role in the translation apparatus; inhibits cell-free translation of mRNAs (By similarity).</text>
</comment>
<comment type="similarity">
    <text evidence="3">Belongs to the universal ribosomal protein uL30 family.</text>
</comment>
<accession>A0CEY2</accession>